<protein>
    <recommendedName>
        <fullName>ATPase expression protein 1, mitochondrial</fullName>
    </recommendedName>
    <alternativeName>
        <fullName>Nuclear control of ATPase messenger RNA expression protein 1</fullName>
    </alternativeName>
</protein>
<evidence type="ECO:0000250" key="1"/>
<evidence type="ECO:0000255" key="2"/>
<evidence type="ECO:0000305" key="3"/>
<keyword id="KW-0496">Mitochondrion</keyword>
<keyword id="KW-0809">Transit peptide</keyword>
<keyword id="KW-0810">Translation regulation</keyword>
<name>AEP1_YEAS6</name>
<reference key="1">
    <citation type="journal article" date="2008" name="FEMS Yeast Res.">
        <title>Comparative genome analysis of a Saccharomyces cerevisiae wine strain.</title>
        <authorList>
            <person name="Borneman A.R."/>
            <person name="Forgan A.H."/>
            <person name="Pretorius I.S."/>
            <person name="Chambers P.J."/>
        </authorList>
    </citation>
    <scope>NUCLEOTIDE SEQUENCE [LARGE SCALE GENOMIC DNA]</scope>
    <source>
        <strain>AWRI1631</strain>
    </source>
</reference>
<feature type="transit peptide" description="Mitochondrion" evidence="2">
    <location>
        <begin position="1"/>
        <end position="19"/>
    </location>
</feature>
<feature type="chain" id="PRO_0000405606" description="ATPase expression protein 1, mitochondrial">
    <location>
        <begin position="20"/>
        <end position="518"/>
    </location>
</feature>
<proteinExistence type="inferred from homology"/>
<gene>
    <name type="primary">AEP1</name>
    <name type="synonym">NCA1</name>
    <name type="ORF">AWRI1631_132030</name>
</gene>
<comment type="function">
    <text evidence="1">Required for translation of the mitochondrial OLI1 transcript encoding subunit 9 of mitochondrial ATP synthase.</text>
</comment>
<comment type="subcellular location">
    <subcellularLocation>
        <location evidence="1">Mitochondrion</location>
    </subcellularLocation>
</comment>
<comment type="similarity">
    <text evidence="3">Belongs to the AEP1 family.</text>
</comment>
<organism>
    <name type="scientific">Saccharomyces cerevisiae (strain AWRI1631)</name>
    <name type="common">Baker's yeast</name>
    <dbReference type="NCBI Taxonomy" id="545124"/>
    <lineage>
        <taxon>Eukaryota</taxon>
        <taxon>Fungi</taxon>
        <taxon>Dikarya</taxon>
        <taxon>Ascomycota</taxon>
        <taxon>Saccharomycotina</taxon>
        <taxon>Saccharomycetes</taxon>
        <taxon>Saccharomycetales</taxon>
        <taxon>Saccharomycetaceae</taxon>
        <taxon>Saccharomyces</taxon>
    </lineage>
</organism>
<accession>B5VPJ0</accession>
<sequence length="518" mass="59580">MITTVQEISKWRNLCFIRMQSRKWYPVLKKTPLVADGRKIIKHADKVPHPGEIIHPFYQPTAIEQFTACATEYNPSLLDGKKIAPSLIKHPVSLKTILVDSKLKFDDIRGVNRWLMEFVARRQHQRNIVLTPASKSVRSFHVLHLSSTDIAKLRGLENVLSEIENTNDLQSRVESVNNELQNIFDRDSKQTRLFCEDILAYLIKNYGNSTENLILLINVTEMQLFSRLDQMKAMNIILYHILCKVEANENPPCSPTLVTALENLLAAINNRFFPGRCENSLHPIVIEQLLSYFIITGNLNESKNFLGHLIKKGILPEATIINRYLEAIDVHFDKSTKIFDIRSKFAFIADLAPIIENYGTIDLFKFLIPMCRHFDELCSLLNIIRKSNNAKQAVDSTLPIFIKKVLTFTKDPMINSGNLSTVFNIVSPIYGQNVPSEFVEKFILSFALQGNYTMMAHMIDTYKIKLSHKYQLQIIRALKNSERNHALKNTGAVGYNKEFKKYFIEKYLNCTEREALRP</sequence>
<dbReference type="EMBL" id="ABSV01001811">
    <property type="protein sequence ID" value="EDZ70152.1"/>
    <property type="molecule type" value="Genomic_DNA"/>
</dbReference>
<dbReference type="OrthoDB" id="36478at4893"/>
<dbReference type="Proteomes" id="UP000008988">
    <property type="component" value="Unassembled WGS sequence"/>
</dbReference>
<dbReference type="GO" id="GO:0005739">
    <property type="term" value="C:mitochondrion"/>
    <property type="evidence" value="ECO:0007669"/>
    <property type="project" value="UniProtKB-SubCell"/>
</dbReference>
<dbReference type="GO" id="GO:0045182">
    <property type="term" value="F:translation regulator activity"/>
    <property type="evidence" value="ECO:0007669"/>
    <property type="project" value="InterPro"/>
</dbReference>
<dbReference type="InterPro" id="IPR031467">
    <property type="entry name" value="Aep1"/>
</dbReference>
<dbReference type="Pfam" id="PF17049">
    <property type="entry name" value="AEP1"/>
    <property type="match status" value="1"/>
</dbReference>